<dbReference type="EC" id="4.1.1.31" evidence="1"/>
<dbReference type="EMBL" id="CP000462">
    <property type="protein sequence ID" value="ABK39687.1"/>
    <property type="molecule type" value="Genomic_DNA"/>
</dbReference>
<dbReference type="RefSeq" id="WP_005308531.1">
    <property type="nucleotide sequence ID" value="NC_008570.1"/>
</dbReference>
<dbReference type="RefSeq" id="YP_855124.1">
    <property type="nucleotide sequence ID" value="NC_008570.1"/>
</dbReference>
<dbReference type="SMR" id="A0KFU8"/>
<dbReference type="STRING" id="380703.AHA_0591"/>
<dbReference type="EnsemblBacteria" id="ABK39687">
    <property type="protein sequence ID" value="ABK39687"/>
    <property type="gene ID" value="AHA_0591"/>
</dbReference>
<dbReference type="GeneID" id="4489258"/>
<dbReference type="KEGG" id="aha:AHA_0591"/>
<dbReference type="PATRIC" id="fig|380703.7.peg.587"/>
<dbReference type="eggNOG" id="COG2352">
    <property type="taxonomic scope" value="Bacteria"/>
</dbReference>
<dbReference type="HOGENOM" id="CLU_006557_2_0_6"/>
<dbReference type="OrthoDB" id="9768133at2"/>
<dbReference type="PRO" id="PR:A0KFU8"/>
<dbReference type="Proteomes" id="UP000000756">
    <property type="component" value="Chromosome"/>
</dbReference>
<dbReference type="GO" id="GO:0005829">
    <property type="term" value="C:cytosol"/>
    <property type="evidence" value="ECO:0007669"/>
    <property type="project" value="TreeGrafter"/>
</dbReference>
<dbReference type="GO" id="GO:0000287">
    <property type="term" value="F:magnesium ion binding"/>
    <property type="evidence" value="ECO:0007669"/>
    <property type="project" value="UniProtKB-UniRule"/>
</dbReference>
<dbReference type="GO" id="GO:0008964">
    <property type="term" value="F:phosphoenolpyruvate carboxylase activity"/>
    <property type="evidence" value="ECO:0007669"/>
    <property type="project" value="UniProtKB-UniRule"/>
</dbReference>
<dbReference type="GO" id="GO:0015977">
    <property type="term" value="P:carbon fixation"/>
    <property type="evidence" value="ECO:0007669"/>
    <property type="project" value="UniProtKB-UniRule"/>
</dbReference>
<dbReference type="GO" id="GO:0006107">
    <property type="term" value="P:oxaloacetate metabolic process"/>
    <property type="evidence" value="ECO:0007669"/>
    <property type="project" value="UniProtKB-UniRule"/>
</dbReference>
<dbReference type="GO" id="GO:0006099">
    <property type="term" value="P:tricarboxylic acid cycle"/>
    <property type="evidence" value="ECO:0007669"/>
    <property type="project" value="InterPro"/>
</dbReference>
<dbReference type="Gene3D" id="1.20.1440.90">
    <property type="entry name" value="Phosphoenolpyruvate/pyruvate domain"/>
    <property type="match status" value="1"/>
</dbReference>
<dbReference type="HAMAP" id="MF_00595">
    <property type="entry name" value="PEPcase_type1"/>
    <property type="match status" value="1"/>
</dbReference>
<dbReference type="InterPro" id="IPR021135">
    <property type="entry name" value="PEP_COase"/>
</dbReference>
<dbReference type="InterPro" id="IPR022805">
    <property type="entry name" value="PEP_COase_bac/pln-type"/>
</dbReference>
<dbReference type="InterPro" id="IPR018129">
    <property type="entry name" value="PEP_COase_Lys_AS"/>
</dbReference>
<dbReference type="InterPro" id="IPR033129">
    <property type="entry name" value="PEPCASE_His_AS"/>
</dbReference>
<dbReference type="InterPro" id="IPR015813">
    <property type="entry name" value="Pyrv/PenolPyrv_kinase-like_dom"/>
</dbReference>
<dbReference type="NCBIfam" id="NF000584">
    <property type="entry name" value="PRK00009.1"/>
    <property type="match status" value="1"/>
</dbReference>
<dbReference type="PANTHER" id="PTHR30523">
    <property type="entry name" value="PHOSPHOENOLPYRUVATE CARBOXYLASE"/>
    <property type="match status" value="1"/>
</dbReference>
<dbReference type="PANTHER" id="PTHR30523:SF6">
    <property type="entry name" value="PHOSPHOENOLPYRUVATE CARBOXYLASE"/>
    <property type="match status" value="1"/>
</dbReference>
<dbReference type="Pfam" id="PF00311">
    <property type="entry name" value="PEPcase"/>
    <property type="match status" value="1"/>
</dbReference>
<dbReference type="PRINTS" id="PR00150">
    <property type="entry name" value="PEPCARBXLASE"/>
</dbReference>
<dbReference type="SUPFAM" id="SSF51621">
    <property type="entry name" value="Phosphoenolpyruvate/pyruvate domain"/>
    <property type="match status" value="1"/>
</dbReference>
<dbReference type="PROSITE" id="PS00781">
    <property type="entry name" value="PEPCASE_1"/>
    <property type="match status" value="1"/>
</dbReference>
<dbReference type="PROSITE" id="PS00393">
    <property type="entry name" value="PEPCASE_2"/>
    <property type="match status" value="1"/>
</dbReference>
<evidence type="ECO:0000255" key="1">
    <source>
        <dbReference type="HAMAP-Rule" id="MF_00595"/>
    </source>
</evidence>
<proteinExistence type="inferred from homology"/>
<comment type="function">
    <text evidence="1">Forms oxaloacetate, a four-carbon dicarboxylic acid source for the tricarboxylic acid cycle.</text>
</comment>
<comment type="catalytic activity">
    <reaction evidence="1">
        <text>oxaloacetate + phosphate = phosphoenolpyruvate + hydrogencarbonate</text>
        <dbReference type="Rhea" id="RHEA:28370"/>
        <dbReference type="ChEBI" id="CHEBI:16452"/>
        <dbReference type="ChEBI" id="CHEBI:17544"/>
        <dbReference type="ChEBI" id="CHEBI:43474"/>
        <dbReference type="ChEBI" id="CHEBI:58702"/>
        <dbReference type="EC" id="4.1.1.31"/>
    </reaction>
</comment>
<comment type="cofactor">
    <cofactor evidence="1">
        <name>Mg(2+)</name>
        <dbReference type="ChEBI" id="CHEBI:18420"/>
    </cofactor>
</comment>
<comment type="similarity">
    <text evidence="1">Belongs to the PEPCase type 1 family.</text>
</comment>
<sequence>MNEKYAALRANVGMLGQLLGKSIKDHQGQAFLDKIETIRQLAKSSRKGNETDRERLLDTLRNLSDDELLPVARAFSQFLNLANVAEQFHTISRRCEEQVCTPDPLEQMFDKLKASNLSQEAIIQAVRELDIDLVLTAHPTEVTRRTLIHKHVQLNDCLEALELSDLLPRERDKILNRIEQLVNQAWHTNEIREQRPTPVDEAKWGFAVVENSLWPAIPEFMRNLDERLQHHLGVRLPLDAAPVKFTSWMGGDRDGNPFVTAKVTAEVLELGRWMAVSLFYKDIKELTSELSMSDCTDAVRERVGDHPEPYRALVRELREQLRETQEFLTAKVQGQASESRDLVKTTAQLREPLELCYHSLHACGMGNIADGMLLDVLRKLACFGIHLVKLDIRQDGERHGQVFSELTRYLGMGDYAEWSEDDKQAFLLNELNSRRPLIPTDWEPSDETRETLDTCKVIAQHDPDAFGIYIISMAGAPSDVLAVQLLLKEAGCKFRMPVAPLFETQEDLMAGTAVMERLLSVDWYRGYIQGRQYVMIGYSDSAKDAGMMAAGWAQYAAMESLVALAEANNLRLTLFHGRGGTVGRGGAPAHQAILSQPPGSLRGGLRVTEQGEMIRFKFGLPKVAIQSLNLYTSAVLEGNLLPPPKPKECWRAVMEQLASVSCDHYRSIVRGHPDFVPYFRAATPEMELGKLPLGSRPSKRKPNGGVESLRAIPWIFAWTQNRLMLPAWLGAHKGLQQAIADGQKGVLEEMSRQWPFFRTRLEMLEMVFLKADVWLAEYYDTRLVPKELWGLGKQLRQELADSIQVVLELRPQGDLLDDQPWIKESIKLRNPYTDPLNVLQVELLGRSRNHAETLHPELDQALMVTIAGIAAGMRNTG</sequence>
<protein>
    <recommendedName>
        <fullName evidence="1">Phosphoenolpyruvate carboxylase</fullName>
        <shortName evidence="1">PEPC</shortName>
        <shortName evidence="1">PEPCase</shortName>
        <ecNumber evidence="1">4.1.1.31</ecNumber>
    </recommendedName>
</protein>
<accession>A0KFU8</accession>
<reference key="1">
    <citation type="journal article" date="2006" name="J. Bacteriol.">
        <title>Genome sequence of Aeromonas hydrophila ATCC 7966T: jack of all trades.</title>
        <authorList>
            <person name="Seshadri R."/>
            <person name="Joseph S.W."/>
            <person name="Chopra A.K."/>
            <person name="Sha J."/>
            <person name="Shaw J."/>
            <person name="Graf J."/>
            <person name="Haft D.H."/>
            <person name="Wu M."/>
            <person name="Ren Q."/>
            <person name="Rosovitz M.J."/>
            <person name="Madupu R."/>
            <person name="Tallon L."/>
            <person name="Kim M."/>
            <person name="Jin S."/>
            <person name="Vuong H."/>
            <person name="Stine O.C."/>
            <person name="Ali A."/>
            <person name="Horneman A.J."/>
            <person name="Heidelberg J.F."/>
        </authorList>
    </citation>
    <scope>NUCLEOTIDE SEQUENCE [LARGE SCALE GENOMIC DNA]</scope>
    <source>
        <strain>ATCC 7966 / DSM 30187 / BCRC 13018 / CCUG 14551 / JCM 1027 / KCTC 2358 / NCIMB 9240 / NCTC 8049</strain>
    </source>
</reference>
<organism>
    <name type="scientific">Aeromonas hydrophila subsp. hydrophila (strain ATCC 7966 / DSM 30187 / BCRC 13018 / CCUG 14551 / JCM 1027 / KCTC 2358 / NCIMB 9240 / NCTC 8049)</name>
    <dbReference type="NCBI Taxonomy" id="380703"/>
    <lineage>
        <taxon>Bacteria</taxon>
        <taxon>Pseudomonadati</taxon>
        <taxon>Pseudomonadota</taxon>
        <taxon>Gammaproteobacteria</taxon>
        <taxon>Aeromonadales</taxon>
        <taxon>Aeromonadaceae</taxon>
        <taxon>Aeromonas</taxon>
    </lineage>
</organism>
<feature type="chain" id="PRO_1000025544" description="Phosphoenolpyruvate carboxylase">
    <location>
        <begin position="1"/>
        <end position="877"/>
    </location>
</feature>
<feature type="active site" evidence="1">
    <location>
        <position position="138"/>
    </location>
</feature>
<feature type="active site" evidence="1">
    <location>
        <position position="543"/>
    </location>
</feature>
<name>CAPP_AERHH</name>
<gene>
    <name evidence="1" type="primary">ppc</name>
    <name type="ordered locus">AHA_0591</name>
</gene>
<keyword id="KW-0120">Carbon dioxide fixation</keyword>
<keyword id="KW-0456">Lyase</keyword>
<keyword id="KW-0460">Magnesium</keyword>
<keyword id="KW-1185">Reference proteome</keyword>